<evidence type="ECO:0000255" key="1">
    <source>
        <dbReference type="HAMAP-Rule" id="MF_01691"/>
    </source>
</evidence>
<accession>B7HMV2</accession>
<reference key="1">
    <citation type="submission" date="2008-10" db="EMBL/GenBank/DDBJ databases">
        <title>Genome sequence of Bacillus cereus AH187.</title>
        <authorList>
            <person name="Dodson R.J."/>
            <person name="Durkin A.S."/>
            <person name="Rosovitz M.J."/>
            <person name="Rasko D.A."/>
            <person name="Kolsto A.B."/>
            <person name="Okstad O.A."/>
            <person name="Ravel J."/>
            <person name="Sutton G."/>
        </authorList>
    </citation>
    <scope>NUCLEOTIDE SEQUENCE [LARGE SCALE GENOMIC DNA]</scope>
    <source>
        <strain>AH187</strain>
    </source>
</reference>
<gene>
    <name evidence="1" type="primary">dapH</name>
    <name type="ordered locus">BCAH187_A4101</name>
</gene>
<feature type="chain" id="PRO_0000376626" description="2,3,4,5-tetrahydropyridine-2,6-dicarboxylate N-acetyltransferase">
    <location>
        <begin position="1"/>
        <end position="240"/>
    </location>
</feature>
<proteinExistence type="inferred from homology"/>
<name>DAPH_BACC7</name>
<comment type="function">
    <text evidence="1">Catalyzes the transfer of an acetyl group from acetyl-CoA to tetrahydrodipicolinate.</text>
</comment>
<comment type="catalytic activity">
    <reaction evidence="1">
        <text>(S)-2,3,4,5-tetrahydrodipicolinate + acetyl-CoA + H2O = L-2-acetamido-6-oxoheptanedioate + CoA</text>
        <dbReference type="Rhea" id="RHEA:13085"/>
        <dbReference type="ChEBI" id="CHEBI:15377"/>
        <dbReference type="ChEBI" id="CHEBI:16845"/>
        <dbReference type="ChEBI" id="CHEBI:57287"/>
        <dbReference type="ChEBI" id="CHEBI:57288"/>
        <dbReference type="ChEBI" id="CHEBI:58117"/>
        <dbReference type="EC" id="2.3.1.89"/>
    </reaction>
</comment>
<comment type="pathway">
    <text evidence="1">Amino-acid biosynthesis; L-lysine biosynthesis via DAP pathway; LL-2,6-diaminopimelate from (S)-tetrahydrodipicolinate (acetylase route): step 1/3.</text>
</comment>
<comment type="similarity">
    <text evidence="1">Belongs to the transferase hexapeptide repeat family. DapH subfamily.</text>
</comment>
<dbReference type="EC" id="2.3.1.89" evidence="1"/>
<dbReference type="EMBL" id="CP001177">
    <property type="protein sequence ID" value="ACJ82250.1"/>
    <property type="molecule type" value="Genomic_DNA"/>
</dbReference>
<dbReference type="SMR" id="B7HMV2"/>
<dbReference type="KEGG" id="bcr:BCAH187_A4101"/>
<dbReference type="HOGENOM" id="CLU_103751_0_0_9"/>
<dbReference type="UniPathway" id="UPA00034">
    <property type="reaction ID" value="UER00022"/>
</dbReference>
<dbReference type="Proteomes" id="UP000002214">
    <property type="component" value="Chromosome"/>
</dbReference>
<dbReference type="GO" id="GO:0047200">
    <property type="term" value="F:tetrahydrodipicolinate N-acetyltransferase activity"/>
    <property type="evidence" value="ECO:0007669"/>
    <property type="project" value="UniProtKB-EC"/>
</dbReference>
<dbReference type="GO" id="GO:0019877">
    <property type="term" value="P:diaminopimelate biosynthetic process"/>
    <property type="evidence" value="ECO:0007669"/>
    <property type="project" value="UniProtKB-UniRule"/>
</dbReference>
<dbReference type="GO" id="GO:0009089">
    <property type="term" value="P:lysine biosynthetic process via diaminopimelate"/>
    <property type="evidence" value="ECO:0007669"/>
    <property type="project" value="UniProtKB-UniRule"/>
</dbReference>
<dbReference type="CDD" id="cd03350">
    <property type="entry name" value="LbH_THP_succinylT"/>
    <property type="match status" value="1"/>
</dbReference>
<dbReference type="Gene3D" id="2.160.10.10">
    <property type="entry name" value="Hexapeptide repeat proteins"/>
    <property type="match status" value="1"/>
</dbReference>
<dbReference type="Gene3D" id="3.30.70.250">
    <property type="entry name" value="Malonyl-CoA ACP transacylase, ACP-binding"/>
    <property type="match status" value="1"/>
</dbReference>
<dbReference type="HAMAP" id="MF_01691">
    <property type="entry name" value="DapH"/>
    <property type="match status" value="1"/>
</dbReference>
<dbReference type="InterPro" id="IPR019873">
    <property type="entry name" value="DapH"/>
</dbReference>
<dbReference type="InterPro" id="IPR013710">
    <property type="entry name" value="DapH_N"/>
</dbReference>
<dbReference type="InterPro" id="IPR001451">
    <property type="entry name" value="Hexapep"/>
</dbReference>
<dbReference type="InterPro" id="IPR018357">
    <property type="entry name" value="Hexapep_transf_CS"/>
</dbReference>
<dbReference type="InterPro" id="IPR050179">
    <property type="entry name" value="Trans_hexapeptide_repeat"/>
</dbReference>
<dbReference type="InterPro" id="IPR011004">
    <property type="entry name" value="Trimer_LpxA-like_sf"/>
</dbReference>
<dbReference type="NCBIfam" id="TIGR03532">
    <property type="entry name" value="DapD_Ac"/>
    <property type="match status" value="1"/>
</dbReference>
<dbReference type="PANTHER" id="PTHR43300:SF10">
    <property type="entry name" value="2,3,4,5-TETRAHYDROPYRIDINE-2,6-DICARBOXYLATE N-ACETYLTRANSFERASE"/>
    <property type="match status" value="1"/>
</dbReference>
<dbReference type="PANTHER" id="PTHR43300">
    <property type="entry name" value="ACETYLTRANSFERASE"/>
    <property type="match status" value="1"/>
</dbReference>
<dbReference type="Pfam" id="PF08503">
    <property type="entry name" value="DapH_N"/>
    <property type="match status" value="1"/>
</dbReference>
<dbReference type="Pfam" id="PF00132">
    <property type="entry name" value="Hexapep"/>
    <property type="match status" value="1"/>
</dbReference>
<dbReference type="Pfam" id="PF14602">
    <property type="entry name" value="Hexapep_2"/>
    <property type="match status" value="1"/>
</dbReference>
<dbReference type="SUPFAM" id="SSF51161">
    <property type="entry name" value="Trimeric LpxA-like enzymes"/>
    <property type="match status" value="1"/>
</dbReference>
<dbReference type="PROSITE" id="PS00101">
    <property type="entry name" value="HEXAPEP_TRANSFERASES"/>
    <property type="match status" value="1"/>
</dbReference>
<keyword id="KW-0012">Acyltransferase</keyword>
<keyword id="KW-0028">Amino-acid biosynthesis</keyword>
<keyword id="KW-0220">Diaminopimelate biosynthesis</keyword>
<keyword id="KW-0457">Lysine biosynthesis</keyword>
<keyword id="KW-0677">Repeat</keyword>
<keyword id="KW-0808">Transferase</keyword>
<organism>
    <name type="scientific">Bacillus cereus (strain AH187)</name>
    <dbReference type="NCBI Taxonomy" id="405534"/>
    <lineage>
        <taxon>Bacteria</taxon>
        <taxon>Bacillati</taxon>
        <taxon>Bacillota</taxon>
        <taxon>Bacilli</taxon>
        <taxon>Bacillales</taxon>
        <taxon>Bacillaceae</taxon>
        <taxon>Bacillus</taxon>
        <taxon>Bacillus cereus group</taxon>
    </lineage>
</organism>
<protein>
    <recommendedName>
        <fullName evidence="1">2,3,4,5-tetrahydropyridine-2,6-dicarboxylate N-acetyltransferase</fullName>
        <ecNumber evidence="1">2.3.1.89</ecNumber>
    </recommendedName>
    <alternativeName>
        <fullName evidence="1">Tetrahydrodipicolinate N-acetyltransferase</fullName>
        <shortName evidence="1">THP acetyltransferase</shortName>
        <shortName evidence="1">Tetrahydropicolinate acetylase</shortName>
    </alternativeName>
</protein>
<sequence>MKMMDANEIISFIQKSEKKTPVKVYIKGNLKEVTFPETVQAFVNKKSGVLFGEWSEIKTILDENSKYIVDYVVENDRRNSAIPMLDLKGIKARIEPGAIIRDHVEIGDNAVIMMNATINIGAVIGEGSMIDMNAVLGGRATVGKNCHVGAGAVLAGVIEPPSAKPVIVEDDVVIGANVVVLEGVTVGKGAVVAAGAVVTEDVPPYTVVAGTPARVIKEIDEKTKAKTEIKQELRQLNPEK</sequence>